<keyword id="KW-1003">Cell membrane</keyword>
<keyword id="KW-0342">GTP-binding</keyword>
<keyword id="KW-0378">Hydrolase</keyword>
<keyword id="KW-0472">Membrane</keyword>
<keyword id="KW-0547">Nucleotide-binding</keyword>
<keyword id="KW-0648">Protein biosynthesis</keyword>
<keyword id="KW-1185">Reference proteome</keyword>
<organism>
    <name type="scientific">Clostridium botulinum (strain Hall / ATCC 3502 / NCTC 13319 / Type A)</name>
    <dbReference type="NCBI Taxonomy" id="441771"/>
    <lineage>
        <taxon>Bacteria</taxon>
        <taxon>Bacillati</taxon>
        <taxon>Bacillota</taxon>
        <taxon>Clostridia</taxon>
        <taxon>Eubacteriales</taxon>
        <taxon>Clostridiaceae</taxon>
        <taxon>Clostridium</taxon>
    </lineage>
</organism>
<comment type="function">
    <text evidence="1">Required for accurate and efficient protein synthesis under certain stress conditions. May act as a fidelity factor of the translation reaction, by catalyzing a one-codon backward translocation of tRNAs on improperly translocated ribosomes. Back-translocation proceeds from a post-translocation (POST) complex to a pre-translocation (PRE) complex, thus giving elongation factor G a second chance to translocate the tRNAs correctly. Binds to ribosomes in a GTP-dependent manner.</text>
</comment>
<comment type="catalytic activity">
    <reaction evidence="1">
        <text>GTP + H2O = GDP + phosphate + H(+)</text>
        <dbReference type="Rhea" id="RHEA:19669"/>
        <dbReference type="ChEBI" id="CHEBI:15377"/>
        <dbReference type="ChEBI" id="CHEBI:15378"/>
        <dbReference type="ChEBI" id="CHEBI:37565"/>
        <dbReference type="ChEBI" id="CHEBI:43474"/>
        <dbReference type="ChEBI" id="CHEBI:58189"/>
        <dbReference type="EC" id="3.6.5.n1"/>
    </reaction>
</comment>
<comment type="subcellular location">
    <subcellularLocation>
        <location evidence="1">Cell membrane</location>
        <topology evidence="1">Peripheral membrane protein</topology>
        <orientation evidence="1">Cytoplasmic side</orientation>
    </subcellularLocation>
</comment>
<comment type="similarity">
    <text evidence="1">Belongs to the TRAFAC class translation factor GTPase superfamily. Classic translation factor GTPase family. LepA subfamily.</text>
</comment>
<reference key="1">
    <citation type="journal article" date="2007" name="Genome Res.">
        <title>Genome sequence of a proteolytic (Group I) Clostridium botulinum strain Hall A and comparative analysis of the clostridial genomes.</title>
        <authorList>
            <person name="Sebaihia M."/>
            <person name="Peck M.W."/>
            <person name="Minton N.P."/>
            <person name="Thomson N.R."/>
            <person name="Holden M.T.G."/>
            <person name="Mitchell W.J."/>
            <person name="Carter A.T."/>
            <person name="Bentley S.D."/>
            <person name="Mason D.R."/>
            <person name="Crossman L."/>
            <person name="Paul C.J."/>
            <person name="Ivens A."/>
            <person name="Wells-Bennik M.H.J."/>
            <person name="Davis I.J."/>
            <person name="Cerdeno-Tarraga A.M."/>
            <person name="Churcher C."/>
            <person name="Quail M.A."/>
            <person name="Chillingworth T."/>
            <person name="Feltwell T."/>
            <person name="Fraser A."/>
            <person name="Goodhead I."/>
            <person name="Hance Z."/>
            <person name="Jagels K."/>
            <person name="Larke N."/>
            <person name="Maddison M."/>
            <person name="Moule S."/>
            <person name="Mungall K."/>
            <person name="Norbertczak H."/>
            <person name="Rabbinowitsch E."/>
            <person name="Sanders M."/>
            <person name="Simmonds M."/>
            <person name="White B."/>
            <person name="Whithead S."/>
            <person name="Parkhill J."/>
        </authorList>
    </citation>
    <scope>NUCLEOTIDE SEQUENCE [LARGE SCALE GENOMIC DNA]</scope>
    <source>
        <strain>Hall / ATCC 3502 / NCTC 13319 / Type A</strain>
    </source>
</reference>
<reference key="2">
    <citation type="journal article" date="2007" name="PLoS ONE">
        <title>Analysis of the neurotoxin complex genes in Clostridium botulinum A1-A4 and B1 strains: BoNT/A3, /Ba4 and /B1 clusters are located within plasmids.</title>
        <authorList>
            <person name="Smith T.J."/>
            <person name="Hill K.K."/>
            <person name="Foley B.T."/>
            <person name="Detter J.C."/>
            <person name="Munk A.C."/>
            <person name="Bruce D.C."/>
            <person name="Doggett N.A."/>
            <person name="Smith L.A."/>
            <person name="Marks J.D."/>
            <person name="Xie G."/>
            <person name="Brettin T.S."/>
        </authorList>
    </citation>
    <scope>NUCLEOTIDE SEQUENCE [LARGE SCALE GENOMIC DNA]</scope>
    <source>
        <strain>Hall / ATCC 3502 / NCTC 13319 / Type A</strain>
    </source>
</reference>
<protein>
    <recommendedName>
        <fullName evidence="1">Elongation factor 4</fullName>
        <shortName evidence="1">EF-4</shortName>
        <ecNumber evidence="1">3.6.5.n1</ecNumber>
    </recommendedName>
    <alternativeName>
        <fullName evidence="1">Ribosomal back-translocase LepA</fullName>
    </alternativeName>
</protein>
<sequence>MQSERQKYIRNFSIVAHIDHGKSTLADRLIEATGTLTEREMDTQVLDNMDLEKERGITIKSQAVRLIYKRDTGEEYTLNLIDTPGHVDFNYEVSRSLAACEGAILVVDATQGIQAQTLANCYLALDNDLEIVPVINKIDLPSARPEEVKQEIEDVIGIEAEDAPLVSAKTGLNIKDALEAIVNKVPAPDGDEKAPLKALIFDSYYDSYKGVVCHIRVKEGAIKEGTEIKLMNTGKVYEVVEVGVFVPNYMPVDELKAGDVGYVTASIKNVRDARVGDTITEAKRSANEALSGYRPAVPMVFSGIYPVDGAKYEELKEALEKLQVNDAALSFEPETSIALGFGFRCGFLGLLHMDIIQERLEREFNLDIITTAPSVIYKITKTDGTLIELTNPTNMPSPSEIKLMEEPIVKSSIITPSDYVGAVMDLAQNRRGIFKDMQYLDTTRVSLNYEIPLNEIIYDFFDALKSRTRGYASFDYELIGYKDADLVKLDILLNADVVDALSMIVPRERAYAKGRNMAQKLKEIIPRQMFEIPIQAAVGAKIIARETIKAMRKDVLAKCYGGDISRKRKLLEKQKEGKKRMRQVGSVEVPQEAFMAVLKTEE</sequence>
<proteinExistence type="inferred from homology"/>
<accession>A5I644</accession>
<accession>A7G7C7</accession>
<dbReference type="EC" id="3.6.5.n1" evidence="1"/>
<dbReference type="EMBL" id="CP000727">
    <property type="protein sequence ID" value="ABS38795.1"/>
    <property type="molecule type" value="Genomic_DNA"/>
</dbReference>
<dbReference type="EMBL" id="AM412317">
    <property type="protein sequence ID" value="CAL84526.1"/>
    <property type="molecule type" value="Genomic_DNA"/>
</dbReference>
<dbReference type="RefSeq" id="WP_003357725.1">
    <property type="nucleotide sequence ID" value="NC_009698.1"/>
</dbReference>
<dbReference type="RefSeq" id="YP_001255456.1">
    <property type="nucleotide sequence ID" value="NC_009495.1"/>
</dbReference>
<dbReference type="RefSeq" id="YP_001388692.1">
    <property type="nucleotide sequence ID" value="NC_009698.1"/>
</dbReference>
<dbReference type="SMR" id="A5I644"/>
<dbReference type="GeneID" id="5186162"/>
<dbReference type="KEGG" id="cbh:CLC_2859"/>
<dbReference type="KEGG" id="cbo:CBO2963"/>
<dbReference type="PATRIC" id="fig|413999.7.peg.2942"/>
<dbReference type="HOGENOM" id="CLU_009995_3_3_9"/>
<dbReference type="PRO" id="PR:A5I644"/>
<dbReference type="Proteomes" id="UP000001986">
    <property type="component" value="Chromosome"/>
</dbReference>
<dbReference type="GO" id="GO:0005886">
    <property type="term" value="C:plasma membrane"/>
    <property type="evidence" value="ECO:0007669"/>
    <property type="project" value="UniProtKB-SubCell"/>
</dbReference>
<dbReference type="GO" id="GO:0005525">
    <property type="term" value="F:GTP binding"/>
    <property type="evidence" value="ECO:0007669"/>
    <property type="project" value="UniProtKB-UniRule"/>
</dbReference>
<dbReference type="GO" id="GO:0003924">
    <property type="term" value="F:GTPase activity"/>
    <property type="evidence" value="ECO:0007669"/>
    <property type="project" value="UniProtKB-UniRule"/>
</dbReference>
<dbReference type="GO" id="GO:0043022">
    <property type="term" value="F:ribosome binding"/>
    <property type="evidence" value="ECO:0000318"/>
    <property type="project" value="GO_Central"/>
</dbReference>
<dbReference type="GO" id="GO:0003746">
    <property type="term" value="F:translation elongation factor activity"/>
    <property type="evidence" value="ECO:0007669"/>
    <property type="project" value="UniProtKB-UniRule"/>
</dbReference>
<dbReference type="GO" id="GO:0045727">
    <property type="term" value="P:positive regulation of translation"/>
    <property type="evidence" value="ECO:0000318"/>
    <property type="project" value="GO_Central"/>
</dbReference>
<dbReference type="CDD" id="cd03699">
    <property type="entry name" value="EF4_II"/>
    <property type="match status" value="1"/>
</dbReference>
<dbReference type="CDD" id="cd16260">
    <property type="entry name" value="EF4_III"/>
    <property type="match status" value="1"/>
</dbReference>
<dbReference type="CDD" id="cd01890">
    <property type="entry name" value="LepA"/>
    <property type="match status" value="1"/>
</dbReference>
<dbReference type="CDD" id="cd03709">
    <property type="entry name" value="lepA_C"/>
    <property type="match status" value="1"/>
</dbReference>
<dbReference type="FunFam" id="3.40.50.300:FF:000078">
    <property type="entry name" value="Elongation factor 4"/>
    <property type="match status" value="1"/>
</dbReference>
<dbReference type="FunFam" id="2.40.30.10:FF:000015">
    <property type="entry name" value="Translation factor GUF1, mitochondrial"/>
    <property type="match status" value="1"/>
</dbReference>
<dbReference type="FunFam" id="3.30.70.240:FF:000007">
    <property type="entry name" value="Translation factor GUF1, mitochondrial"/>
    <property type="match status" value="1"/>
</dbReference>
<dbReference type="FunFam" id="3.30.70.2570:FF:000001">
    <property type="entry name" value="Translation factor GUF1, mitochondrial"/>
    <property type="match status" value="1"/>
</dbReference>
<dbReference type="FunFam" id="3.30.70.870:FF:000004">
    <property type="entry name" value="Translation factor GUF1, mitochondrial"/>
    <property type="match status" value="1"/>
</dbReference>
<dbReference type="Gene3D" id="3.30.70.240">
    <property type="match status" value="1"/>
</dbReference>
<dbReference type="Gene3D" id="3.30.70.2570">
    <property type="entry name" value="Elongation factor 4, C-terminal domain"/>
    <property type="match status" value="1"/>
</dbReference>
<dbReference type="Gene3D" id="3.30.70.870">
    <property type="entry name" value="Elongation Factor G (Translational Gtpase), domain 3"/>
    <property type="match status" value="1"/>
</dbReference>
<dbReference type="Gene3D" id="3.40.50.300">
    <property type="entry name" value="P-loop containing nucleotide triphosphate hydrolases"/>
    <property type="match status" value="1"/>
</dbReference>
<dbReference type="Gene3D" id="2.40.30.10">
    <property type="entry name" value="Translation factors"/>
    <property type="match status" value="1"/>
</dbReference>
<dbReference type="HAMAP" id="MF_00071">
    <property type="entry name" value="LepA"/>
    <property type="match status" value="1"/>
</dbReference>
<dbReference type="InterPro" id="IPR006297">
    <property type="entry name" value="EF-4"/>
</dbReference>
<dbReference type="InterPro" id="IPR035647">
    <property type="entry name" value="EFG_III/V"/>
</dbReference>
<dbReference type="InterPro" id="IPR000640">
    <property type="entry name" value="EFG_V-like"/>
</dbReference>
<dbReference type="InterPro" id="IPR004161">
    <property type="entry name" value="EFTu-like_2"/>
</dbReference>
<dbReference type="InterPro" id="IPR031157">
    <property type="entry name" value="G_TR_CS"/>
</dbReference>
<dbReference type="InterPro" id="IPR038363">
    <property type="entry name" value="LepA_C_sf"/>
</dbReference>
<dbReference type="InterPro" id="IPR013842">
    <property type="entry name" value="LepA_CTD"/>
</dbReference>
<dbReference type="InterPro" id="IPR035654">
    <property type="entry name" value="LepA_IV"/>
</dbReference>
<dbReference type="InterPro" id="IPR027417">
    <property type="entry name" value="P-loop_NTPase"/>
</dbReference>
<dbReference type="InterPro" id="IPR005225">
    <property type="entry name" value="Small_GTP-bd"/>
</dbReference>
<dbReference type="InterPro" id="IPR000795">
    <property type="entry name" value="T_Tr_GTP-bd_dom"/>
</dbReference>
<dbReference type="NCBIfam" id="TIGR01393">
    <property type="entry name" value="lepA"/>
    <property type="match status" value="1"/>
</dbReference>
<dbReference type="NCBIfam" id="TIGR00231">
    <property type="entry name" value="small_GTP"/>
    <property type="match status" value="1"/>
</dbReference>
<dbReference type="PANTHER" id="PTHR43512:SF4">
    <property type="entry name" value="TRANSLATION FACTOR GUF1 HOMOLOG, CHLOROPLASTIC"/>
    <property type="match status" value="1"/>
</dbReference>
<dbReference type="PANTHER" id="PTHR43512">
    <property type="entry name" value="TRANSLATION FACTOR GUF1-RELATED"/>
    <property type="match status" value="1"/>
</dbReference>
<dbReference type="Pfam" id="PF00679">
    <property type="entry name" value="EFG_C"/>
    <property type="match status" value="1"/>
</dbReference>
<dbReference type="Pfam" id="PF00009">
    <property type="entry name" value="GTP_EFTU"/>
    <property type="match status" value="1"/>
</dbReference>
<dbReference type="Pfam" id="PF03144">
    <property type="entry name" value="GTP_EFTU_D2"/>
    <property type="match status" value="1"/>
</dbReference>
<dbReference type="Pfam" id="PF06421">
    <property type="entry name" value="LepA_C"/>
    <property type="match status" value="1"/>
</dbReference>
<dbReference type="PRINTS" id="PR00315">
    <property type="entry name" value="ELONGATNFCT"/>
</dbReference>
<dbReference type="SMART" id="SM00838">
    <property type="entry name" value="EFG_C"/>
    <property type="match status" value="1"/>
</dbReference>
<dbReference type="SUPFAM" id="SSF54980">
    <property type="entry name" value="EF-G C-terminal domain-like"/>
    <property type="match status" value="2"/>
</dbReference>
<dbReference type="SUPFAM" id="SSF52540">
    <property type="entry name" value="P-loop containing nucleoside triphosphate hydrolases"/>
    <property type="match status" value="1"/>
</dbReference>
<dbReference type="PROSITE" id="PS00301">
    <property type="entry name" value="G_TR_1"/>
    <property type="match status" value="1"/>
</dbReference>
<dbReference type="PROSITE" id="PS51722">
    <property type="entry name" value="G_TR_2"/>
    <property type="match status" value="1"/>
</dbReference>
<name>LEPA_CLOBH</name>
<gene>
    <name evidence="1" type="primary">lepA</name>
    <name type="ordered locus">CBO2963</name>
    <name type="ordered locus">CLC_2859</name>
</gene>
<feature type="chain" id="PRO_1000031989" description="Elongation factor 4">
    <location>
        <begin position="1"/>
        <end position="602"/>
    </location>
</feature>
<feature type="domain" description="tr-type G">
    <location>
        <begin position="7"/>
        <end position="189"/>
    </location>
</feature>
<feature type="binding site" evidence="1">
    <location>
        <begin position="19"/>
        <end position="24"/>
    </location>
    <ligand>
        <name>GTP</name>
        <dbReference type="ChEBI" id="CHEBI:37565"/>
    </ligand>
</feature>
<feature type="binding site" evidence="1">
    <location>
        <begin position="136"/>
        <end position="139"/>
    </location>
    <ligand>
        <name>GTP</name>
        <dbReference type="ChEBI" id="CHEBI:37565"/>
    </ligand>
</feature>
<evidence type="ECO:0000255" key="1">
    <source>
        <dbReference type="HAMAP-Rule" id="MF_00071"/>
    </source>
</evidence>